<proteinExistence type="predicted"/>
<reference key="1">
    <citation type="journal article" date="2005" name="Nature">
        <title>The genome of the social amoeba Dictyostelium discoideum.</title>
        <authorList>
            <person name="Eichinger L."/>
            <person name="Pachebat J.A."/>
            <person name="Gloeckner G."/>
            <person name="Rajandream M.A."/>
            <person name="Sucgang R."/>
            <person name="Berriman M."/>
            <person name="Song J."/>
            <person name="Olsen R."/>
            <person name="Szafranski K."/>
            <person name="Xu Q."/>
            <person name="Tunggal B."/>
            <person name="Kummerfeld S."/>
            <person name="Madera M."/>
            <person name="Konfortov B.A."/>
            <person name="Rivero F."/>
            <person name="Bankier A.T."/>
            <person name="Lehmann R."/>
            <person name="Hamlin N."/>
            <person name="Davies R."/>
            <person name="Gaudet P."/>
            <person name="Fey P."/>
            <person name="Pilcher K."/>
            <person name="Chen G."/>
            <person name="Saunders D."/>
            <person name="Sodergren E.J."/>
            <person name="Davis P."/>
            <person name="Kerhornou A."/>
            <person name="Nie X."/>
            <person name="Hall N."/>
            <person name="Anjard C."/>
            <person name="Hemphill L."/>
            <person name="Bason N."/>
            <person name="Farbrother P."/>
            <person name="Desany B."/>
            <person name="Just E."/>
            <person name="Morio T."/>
            <person name="Rost R."/>
            <person name="Churcher C.M."/>
            <person name="Cooper J."/>
            <person name="Haydock S."/>
            <person name="van Driessche N."/>
            <person name="Cronin A."/>
            <person name="Goodhead I."/>
            <person name="Muzny D.M."/>
            <person name="Mourier T."/>
            <person name="Pain A."/>
            <person name="Lu M."/>
            <person name="Harper D."/>
            <person name="Lindsay R."/>
            <person name="Hauser H."/>
            <person name="James K.D."/>
            <person name="Quiles M."/>
            <person name="Madan Babu M."/>
            <person name="Saito T."/>
            <person name="Buchrieser C."/>
            <person name="Wardroper A."/>
            <person name="Felder M."/>
            <person name="Thangavelu M."/>
            <person name="Johnson D."/>
            <person name="Knights A."/>
            <person name="Loulseged H."/>
            <person name="Mungall K.L."/>
            <person name="Oliver K."/>
            <person name="Price C."/>
            <person name="Quail M.A."/>
            <person name="Urushihara H."/>
            <person name="Hernandez J."/>
            <person name="Rabbinowitsch E."/>
            <person name="Steffen D."/>
            <person name="Sanders M."/>
            <person name="Ma J."/>
            <person name="Kohara Y."/>
            <person name="Sharp S."/>
            <person name="Simmonds M.N."/>
            <person name="Spiegler S."/>
            <person name="Tivey A."/>
            <person name="Sugano S."/>
            <person name="White B."/>
            <person name="Walker D."/>
            <person name="Woodward J.R."/>
            <person name="Winckler T."/>
            <person name="Tanaka Y."/>
            <person name="Shaulsky G."/>
            <person name="Schleicher M."/>
            <person name="Weinstock G.M."/>
            <person name="Rosenthal A."/>
            <person name="Cox E.C."/>
            <person name="Chisholm R.L."/>
            <person name="Gibbs R.A."/>
            <person name="Loomis W.F."/>
            <person name="Platzer M."/>
            <person name="Kay R.R."/>
            <person name="Williams J.G."/>
            <person name="Dear P.H."/>
            <person name="Noegel A.A."/>
            <person name="Barrell B.G."/>
            <person name="Kuspa A."/>
        </authorList>
    </citation>
    <scope>NUCLEOTIDE SEQUENCE [LARGE SCALE GENOMIC DNA]</scope>
    <source>
        <strain>AX4</strain>
    </source>
</reference>
<gene>
    <name type="ORF">DDB_G0284005</name>
</gene>
<keyword id="KW-0472">Membrane</keyword>
<keyword id="KW-1185">Reference proteome</keyword>
<keyword id="KW-0812">Transmembrane</keyword>
<keyword id="KW-1133">Transmembrane helix</keyword>
<protein>
    <recommendedName>
        <fullName>Uncharacterized protein DDB_G0284005</fullName>
    </recommendedName>
</protein>
<accession>Q54QA8</accession>
<comment type="subcellular location">
    <subcellularLocation>
        <location evidence="2">Membrane</location>
        <topology evidence="2">Single-pass membrane protein</topology>
    </subcellularLocation>
</comment>
<comment type="sequence caution" evidence="2">
    <conflict type="erroneous gene model prediction">
        <sequence resource="EMBL-CDS" id="EAL65490"/>
    </conflict>
</comment>
<organism>
    <name type="scientific">Dictyostelium discoideum</name>
    <name type="common">Social amoeba</name>
    <dbReference type="NCBI Taxonomy" id="44689"/>
    <lineage>
        <taxon>Eukaryota</taxon>
        <taxon>Amoebozoa</taxon>
        <taxon>Evosea</taxon>
        <taxon>Eumycetozoa</taxon>
        <taxon>Dictyostelia</taxon>
        <taxon>Dictyosteliales</taxon>
        <taxon>Dictyosteliaceae</taxon>
        <taxon>Dictyostelium</taxon>
    </lineage>
</organism>
<name>Y8559_DICDI</name>
<dbReference type="EMBL" id="AAFI02000058">
    <property type="protein sequence ID" value="EAL65490.1"/>
    <property type="status" value="ALT_SEQ"/>
    <property type="molecule type" value="Genomic_DNA"/>
</dbReference>
<dbReference type="RefSeq" id="XP_638836.1">
    <property type="nucleotide sequence ID" value="XM_633744.1"/>
</dbReference>
<dbReference type="SMR" id="Q54QA8"/>
<dbReference type="EnsemblProtists" id="EAL65490">
    <property type="protein sequence ID" value="EAL65490"/>
    <property type="gene ID" value="DDB_G0284005"/>
</dbReference>
<dbReference type="GeneID" id="8624360"/>
<dbReference type="KEGG" id="ddi:DDB_G0284005"/>
<dbReference type="dictyBase" id="DDB_G0284005"/>
<dbReference type="VEuPathDB" id="AmoebaDB:DDB_G0284005"/>
<dbReference type="InParanoid" id="Q54QA8"/>
<dbReference type="PRO" id="PR:Q54QA8"/>
<dbReference type="Proteomes" id="UP000002195">
    <property type="component" value="Chromosome 4"/>
</dbReference>
<dbReference type="GO" id="GO:0016020">
    <property type="term" value="C:membrane"/>
    <property type="evidence" value="ECO:0007669"/>
    <property type="project" value="UniProtKB-SubCell"/>
</dbReference>
<feature type="chain" id="PRO_0000350914" description="Uncharacterized protein DDB_G0284005">
    <location>
        <begin position="1"/>
        <end position="94"/>
    </location>
</feature>
<feature type="transmembrane region" description="Helical" evidence="1">
    <location>
        <begin position="13"/>
        <end position="33"/>
    </location>
</feature>
<sequence>MDEYTNDFPWMYIVICLTTIISVTIFYILVSFFIKRYRNRKNEELGHALITKIVYTPHYNSQPIINGSGHYSIINQPIQPQQQQPQNYYSSMIV</sequence>
<evidence type="ECO:0000255" key="1"/>
<evidence type="ECO:0000305" key="2"/>